<dbReference type="EC" id="5.4.2.12" evidence="1"/>
<dbReference type="EMBL" id="CP000851">
    <property type="protein sequence ID" value="ABV89527.1"/>
    <property type="molecule type" value="Genomic_DNA"/>
</dbReference>
<dbReference type="RefSeq" id="WP_012157404.1">
    <property type="nucleotide sequence ID" value="NC_009901.1"/>
</dbReference>
<dbReference type="SMR" id="A8HAE0"/>
<dbReference type="STRING" id="398579.Spea_4217"/>
<dbReference type="KEGG" id="spl:Spea_4217"/>
<dbReference type="eggNOG" id="COG0696">
    <property type="taxonomic scope" value="Bacteria"/>
</dbReference>
<dbReference type="HOGENOM" id="CLU_026099_2_0_6"/>
<dbReference type="OrthoDB" id="9800863at2"/>
<dbReference type="UniPathway" id="UPA00109">
    <property type="reaction ID" value="UER00186"/>
</dbReference>
<dbReference type="Proteomes" id="UP000002608">
    <property type="component" value="Chromosome"/>
</dbReference>
<dbReference type="GO" id="GO:0005829">
    <property type="term" value="C:cytosol"/>
    <property type="evidence" value="ECO:0007669"/>
    <property type="project" value="TreeGrafter"/>
</dbReference>
<dbReference type="GO" id="GO:0030145">
    <property type="term" value="F:manganese ion binding"/>
    <property type="evidence" value="ECO:0007669"/>
    <property type="project" value="UniProtKB-UniRule"/>
</dbReference>
<dbReference type="GO" id="GO:0004619">
    <property type="term" value="F:phosphoglycerate mutase activity"/>
    <property type="evidence" value="ECO:0007669"/>
    <property type="project" value="UniProtKB-EC"/>
</dbReference>
<dbReference type="GO" id="GO:0006007">
    <property type="term" value="P:glucose catabolic process"/>
    <property type="evidence" value="ECO:0007669"/>
    <property type="project" value="InterPro"/>
</dbReference>
<dbReference type="GO" id="GO:0006096">
    <property type="term" value="P:glycolytic process"/>
    <property type="evidence" value="ECO:0007669"/>
    <property type="project" value="UniProtKB-UniRule"/>
</dbReference>
<dbReference type="CDD" id="cd16010">
    <property type="entry name" value="iPGM"/>
    <property type="match status" value="1"/>
</dbReference>
<dbReference type="FunFam" id="3.40.1450.10:FF:000001">
    <property type="entry name" value="2,3-bisphosphoglycerate-independent phosphoglycerate mutase"/>
    <property type="match status" value="1"/>
</dbReference>
<dbReference type="FunFam" id="3.40.720.10:FF:000001">
    <property type="entry name" value="2,3-bisphosphoglycerate-independent phosphoglycerate mutase"/>
    <property type="match status" value="1"/>
</dbReference>
<dbReference type="Gene3D" id="3.40.720.10">
    <property type="entry name" value="Alkaline Phosphatase, subunit A"/>
    <property type="match status" value="1"/>
</dbReference>
<dbReference type="Gene3D" id="3.40.1450.10">
    <property type="entry name" value="BPG-independent phosphoglycerate mutase, domain B"/>
    <property type="match status" value="1"/>
</dbReference>
<dbReference type="HAMAP" id="MF_01038">
    <property type="entry name" value="GpmI"/>
    <property type="match status" value="1"/>
</dbReference>
<dbReference type="InterPro" id="IPR017850">
    <property type="entry name" value="Alkaline_phosphatase_core_sf"/>
</dbReference>
<dbReference type="InterPro" id="IPR011258">
    <property type="entry name" value="BPG-indep_PGM_N"/>
</dbReference>
<dbReference type="InterPro" id="IPR006124">
    <property type="entry name" value="Metalloenzyme"/>
</dbReference>
<dbReference type="InterPro" id="IPR036646">
    <property type="entry name" value="PGAM_B_sf"/>
</dbReference>
<dbReference type="InterPro" id="IPR005995">
    <property type="entry name" value="Pgm_bpd_ind"/>
</dbReference>
<dbReference type="NCBIfam" id="TIGR01307">
    <property type="entry name" value="pgm_bpd_ind"/>
    <property type="match status" value="1"/>
</dbReference>
<dbReference type="NCBIfam" id="NF003897">
    <property type="entry name" value="PRK05434.1-5"/>
    <property type="match status" value="1"/>
</dbReference>
<dbReference type="PANTHER" id="PTHR31637">
    <property type="entry name" value="2,3-BISPHOSPHOGLYCERATE-INDEPENDENT PHOSPHOGLYCERATE MUTASE"/>
    <property type="match status" value="1"/>
</dbReference>
<dbReference type="PANTHER" id="PTHR31637:SF0">
    <property type="entry name" value="2,3-BISPHOSPHOGLYCERATE-INDEPENDENT PHOSPHOGLYCERATE MUTASE"/>
    <property type="match status" value="1"/>
</dbReference>
<dbReference type="Pfam" id="PF06415">
    <property type="entry name" value="iPGM_N"/>
    <property type="match status" value="1"/>
</dbReference>
<dbReference type="Pfam" id="PF01676">
    <property type="entry name" value="Metalloenzyme"/>
    <property type="match status" value="1"/>
</dbReference>
<dbReference type="PIRSF" id="PIRSF001492">
    <property type="entry name" value="IPGAM"/>
    <property type="match status" value="1"/>
</dbReference>
<dbReference type="SUPFAM" id="SSF64158">
    <property type="entry name" value="2,3-Bisphosphoglycerate-independent phosphoglycerate mutase, substrate-binding domain"/>
    <property type="match status" value="1"/>
</dbReference>
<dbReference type="SUPFAM" id="SSF53649">
    <property type="entry name" value="Alkaline phosphatase-like"/>
    <property type="match status" value="1"/>
</dbReference>
<comment type="function">
    <text evidence="1">Catalyzes the interconversion of 2-phosphoglycerate and 3-phosphoglycerate.</text>
</comment>
<comment type="catalytic activity">
    <reaction evidence="1">
        <text>(2R)-2-phosphoglycerate = (2R)-3-phosphoglycerate</text>
        <dbReference type="Rhea" id="RHEA:15901"/>
        <dbReference type="ChEBI" id="CHEBI:58272"/>
        <dbReference type="ChEBI" id="CHEBI:58289"/>
        <dbReference type="EC" id="5.4.2.12"/>
    </reaction>
</comment>
<comment type="cofactor">
    <cofactor evidence="1">
        <name>Mn(2+)</name>
        <dbReference type="ChEBI" id="CHEBI:29035"/>
    </cofactor>
    <text evidence="1">Binds 2 manganese ions per subunit.</text>
</comment>
<comment type="pathway">
    <text evidence="1">Carbohydrate degradation; glycolysis; pyruvate from D-glyceraldehyde 3-phosphate: step 3/5.</text>
</comment>
<comment type="subunit">
    <text evidence="1">Monomer.</text>
</comment>
<comment type="similarity">
    <text evidence="1">Belongs to the BPG-independent phosphoglycerate mutase family.</text>
</comment>
<proteinExistence type="inferred from homology"/>
<reference key="1">
    <citation type="submission" date="2007-10" db="EMBL/GenBank/DDBJ databases">
        <title>Complete sequence of Shewanella pealeana ATCC 700345.</title>
        <authorList>
            <consortium name="US DOE Joint Genome Institute"/>
            <person name="Copeland A."/>
            <person name="Lucas S."/>
            <person name="Lapidus A."/>
            <person name="Barry K."/>
            <person name="Glavina del Rio T."/>
            <person name="Dalin E."/>
            <person name="Tice H."/>
            <person name="Pitluck S."/>
            <person name="Chertkov O."/>
            <person name="Brettin T."/>
            <person name="Bruce D."/>
            <person name="Detter J.C."/>
            <person name="Han C."/>
            <person name="Schmutz J."/>
            <person name="Larimer F."/>
            <person name="Land M."/>
            <person name="Hauser L."/>
            <person name="Kyrpides N."/>
            <person name="Kim E."/>
            <person name="Zhao J.-S.Z."/>
            <person name="Manno D."/>
            <person name="Hawari J."/>
            <person name="Richardson P."/>
        </authorList>
    </citation>
    <scope>NUCLEOTIDE SEQUENCE [LARGE SCALE GENOMIC DNA]</scope>
    <source>
        <strain>ATCC 700345 / ANG-SQ1</strain>
    </source>
</reference>
<name>GPMI_SHEPA</name>
<keyword id="KW-0324">Glycolysis</keyword>
<keyword id="KW-0413">Isomerase</keyword>
<keyword id="KW-0464">Manganese</keyword>
<keyword id="KW-0479">Metal-binding</keyword>
<keyword id="KW-1185">Reference proteome</keyword>
<organism>
    <name type="scientific">Shewanella pealeana (strain ATCC 700345 / ANG-SQ1)</name>
    <dbReference type="NCBI Taxonomy" id="398579"/>
    <lineage>
        <taxon>Bacteria</taxon>
        <taxon>Pseudomonadati</taxon>
        <taxon>Pseudomonadota</taxon>
        <taxon>Gammaproteobacteria</taxon>
        <taxon>Alteromonadales</taxon>
        <taxon>Shewanellaceae</taxon>
        <taxon>Shewanella</taxon>
    </lineage>
</organism>
<feature type="chain" id="PRO_1000084313" description="2,3-bisphosphoglycerate-independent phosphoglycerate mutase">
    <location>
        <begin position="1"/>
        <end position="514"/>
    </location>
</feature>
<feature type="active site" description="Phosphoserine intermediate" evidence="1">
    <location>
        <position position="64"/>
    </location>
</feature>
<feature type="binding site" evidence="1">
    <location>
        <position position="14"/>
    </location>
    <ligand>
        <name>Mn(2+)</name>
        <dbReference type="ChEBI" id="CHEBI:29035"/>
        <label>2</label>
    </ligand>
</feature>
<feature type="binding site" evidence="1">
    <location>
        <position position="64"/>
    </location>
    <ligand>
        <name>Mn(2+)</name>
        <dbReference type="ChEBI" id="CHEBI:29035"/>
        <label>2</label>
    </ligand>
</feature>
<feature type="binding site" evidence="1">
    <location>
        <position position="125"/>
    </location>
    <ligand>
        <name>substrate</name>
    </ligand>
</feature>
<feature type="binding site" evidence="1">
    <location>
        <begin position="155"/>
        <end position="156"/>
    </location>
    <ligand>
        <name>substrate</name>
    </ligand>
</feature>
<feature type="binding site" evidence="1">
    <location>
        <position position="187"/>
    </location>
    <ligand>
        <name>substrate</name>
    </ligand>
</feature>
<feature type="binding site" evidence="1">
    <location>
        <position position="193"/>
    </location>
    <ligand>
        <name>substrate</name>
    </ligand>
</feature>
<feature type="binding site" evidence="1">
    <location>
        <begin position="263"/>
        <end position="266"/>
    </location>
    <ligand>
        <name>substrate</name>
    </ligand>
</feature>
<feature type="binding site" evidence="1">
    <location>
        <position position="336"/>
    </location>
    <ligand>
        <name>substrate</name>
    </ligand>
</feature>
<feature type="binding site" evidence="1">
    <location>
        <position position="403"/>
    </location>
    <ligand>
        <name>Mn(2+)</name>
        <dbReference type="ChEBI" id="CHEBI:29035"/>
        <label>1</label>
    </ligand>
</feature>
<feature type="binding site" evidence="1">
    <location>
        <position position="407"/>
    </location>
    <ligand>
        <name>Mn(2+)</name>
        <dbReference type="ChEBI" id="CHEBI:29035"/>
        <label>1</label>
    </ligand>
</feature>
<feature type="binding site" evidence="1">
    <location>
        <position position="444"/>
    </location>
    <ligand>
        <name>Mn(2+)</name>
        <dbReference type="ChEBI" id="CHEBI:29035"/>
        <label>2</label>
    </ligand>
</feature>
<feature type="binding site" evidence="1">
    <location>
        <position position="445"/>
    </location>
    <ligand>
        <name>Mn(2+)</name>
        <dbReference type="ChEBI" id="CHEBI:29035"/>
        <label>2</label>
    </ligand>
</feature>
<feature type="binding site" evidence="1">
    <location>
        <position position="463"/>
    </location>
    <ligand>
        <name>Mn(2+)</name>
        <dbReference type="ChEBI" id="CHEBI:29035"/>
        <label>1</label>
    </ligand>
</feature>
<sequence length="514" mass="56230">MTTRKRPLALLILDGWGYRENTQKNAVFHANTPVLDQLNAKYPNSLISGSGIDVGLPDGQMGNSEVGHINIGSGRIVYQELTRISKAIDDGEFDTNPALTKAIDDAIEVNGAVHIMGLLSPGGVHSHQDHIEAMCRLAVKRGAKKVYLHAFLDGRDTPPRSAKPGLAHFEELFKSLGTGQVASVIGRYYAMDRDNRWDRVSQAYELITEGKSLHQSATAVDAIEAAYTRDENDEFVGSTVIPDAQGNIAKLVDNDALIFMNFRADRARQITRSFVDADFDGFERAVTPKINFVMLTEYAANIKAAIAYPSSDLVNTLGETLQDRDLTQLRISETEKYAHVTFFFNGGKEEPFKGEDRILIQSPKVATYDLQPEMSSTELTDKLVAAIESTEYDVIICNYPNGDMVGHTGNFDAAVKACEAVDTCIGRVVEALEKVGGECLITADHGNAEQMTDESTGQAHTAHTSELIPLIYVGRDAEIENGGRLSDLAPTMLTLMGQDVPEEMTGRSIIKLKE</sequence>
<protein>
    <recommendedName>
        <fullName evidence="1">2,3-bisphosphoglycerate-independent phosphoglycerate mutase</fullName>
        <shortName evidence="1">BPG-independent PGAM</shortName>
        <shortName evidence="1">Phosphoglyceromutase</shortName>
        <shortName evidence="1">iPGM</shortName>
        <ecNumber evidence="1">5.4.2.12</ecNumber>
    </recommendedName>
</protein>
<gene>
    <name evidence="1" type="primary">gpmI</name>
    <name type="ordered locus">Spea_4217</name>
</gene>
<accession>A8HAE0</accession>
<evidence type="ECO:0000255" key="1">
    <source>
        <dbReference type="HAMAP-Rule" id="MF_01038"/>
    </source>
</evidence>